<proteinExistence type="evidence at transcript level"/>
<reference key="1">
    <citation type="journal article" date="2013" name="Gene">
        <title>Illumina-based de novo transcriptome sequencing and analysis of Amanita exitialis basidiocarps.</title>
        <authorList>
            <person name="Li P."/>
            <person name="Deng W.Q."/>
            <person name="Li T.H."/>
            <person name="Song B."/>
            <person name="Shen Y.H."/>
        </authorList>
    </citation>
    <scope>NUCLEOTIDE SEQUENCE [MRNA]</scope>
    <scope>FUNCTION</scope>
    <scope>TISSUE SPECIFICITY</scope>
</reference>
<reference key="2">
    <citation type="journal article" date="2002" name="J. Toxicol. Clin. Toxicol.">
        <title>Treatment of amatoxin poisoning: 20-year retrospective analysis.</title>
        <authorList>
            <person name="Enjalbert F."/>
            <person name="Rapior S."/>
            <person name="Nouguier-Soule J."/>
            <person name="Guillon S."/>
            <person name="Amouroux N."/>
            <person name="Cabot C."/>
        </authorList>
    </citation>
    <scope>REVIEW ON TOXICITY</scope>
</reference>
<sequence length="35" mass="3678">MSDINATRLPIWGIGCNPCVGDDVTSVLTRGEALC</sequence>
<dbReference type="EMBL" id="KF387476">
    <property type="protein sequence ID" value="AGW83700.1"/>
    <property type="molecule type" value="mRNA"/>
</dbReference>
<dbReference type="EMBL" id="KF387485">
    <property type="protein sequence ID" value="AGW83709.1"/>
    <property type="molecule type" value="mRNA"/>
</dbReference>
<dbReference type="EMBL" id="KF793336">
    <property type="protein sequence ID" value="AIS72233.1"/>
    <property type="molecule type" value="mRNA"/>
</dbReference>
<dbReference type="GO" id="GO:0090729">
    <property type="term" value="F:toxin activity"/>
    <property type="evidence" value="ECO:0007669"/>
    <property type="project" value="UniProtKB-KW"/>
</dbReference>
<dbReference type="InterPro" id="IPR027582">
    <property type="entry name" value="Amanitin/phalloidin"/>
</dbReference>
<dbReference type="NCBIfam" id="TIGR04309">
    <property type="entry name" value="amanitin"/>
    <property type="match status" value="1"/>
</dbReference>
<dbReference type="Pfam" id="PF24112">
    <property type="entry name" value="Amanitin"/>
    <property type="match status" value="1"/>
</dbReference>
<protein>
    <recommendedName>
        <fullName evidence="5">Alpha-amanitin proprotein 1</fullName>
    </recommendedName>
    <component>
        <recommendedName>
            <fullName evidence="5">Alpha-amanitin</fullName>
        </recommendedName>
        <alternativeName>
            <fullName evidence="5">Amatoxin</fullName>
        </alternativeName>
        <alternativeName>
            <fullName evidence="2">Gamma-amanitin</fullName>
        </alternativeName>
    </component>
</protein>
<comment type="function">
    <text evidence="7">Major toxin belonging to the bicyclic octapeptides amatoxins that acts by binding non-competitively to RNA polymerase II and greatly slowing the elongation of transcripts from target promoters (PubMed:24050899).</text>
</comment>
<comment type="tissue specificity">
    <text evidence="3">Expressed in basidiocarps (PubMed:24050899).</text>
</comment>
<comment type="PTM">
    <text evidence="1 7">Processed by the macrocyclase-peptidase enzyme POPB to yield a toxic cyclic octapeptide (PubMed:24050899). POPB first removes 10 residues from the N-terminus (By similarity). Conformational trapping of the remaining peptide forces the enzyme to release this intermediate rather than proceed to macrocyclization (By similarity). The enzyme rebinds the remaining peptide in a different conformation and catalyzes macrocyclization of the N-terminal 8 residues (By similarity).</text>
</comment>
<comment type="miscellaneous">
    <text evidence="4">The typical symptoms of amatoxin poisoning are gastro-intestinal distress beginning 6-12 hours after ingestion, a remission phase lasting 12-24 hours, and progressive loss of liver function culminating in death within 3-5 days (PubMed:12475187). One of the few effective treatments is liver transplantation (PubMed:12475187).</text>
</comment>
<comment type="similarity">
    <text evidence="6">Belongs to the MSDIN fungal toxin family.</text>
</comment>
<feature type="propeptide" id="PRO_0000443740" evidence="7">
    <location>
        <begin position="1"/>
        <end position="10"/>
    </location>
</feature>
<feature type="peptide" id="PRO_0000443741" description="Alpha-amanitin" evidence="7">
    <location>
        <begin position="11"/>
        <end position="18"/>
    </location>
</feature>
<feature type="propeptide" id="PRO_0000443742" evidence="7">
    <location>
        <begin position="19"/>
        <end position="35"/>
    </location>
</feature>
<feature type="modified residue" description="(3R,4R)-4,5-dihydroxyisoleucine; in form alpha-amanitin" evidence="2">
    <location>
        <position position="11"/>
    </location>
</feature>
<feature type="modified residue" description="(3R,4S)-4-hydroxyisoleucine; in form gamma-amanitin" evidence="2">
    <location>
        <position position="11"/>
    </location>
</feature>
<feature type="modified residue" description="4-hydroxyproline" evidence="2">
    <location>
        <position position="18"/>
    </location>
</feature>
<feature type="cross-link" description="Cyclopeptide (Ile-Pro)" evidence="2">
    <location>
        <begin position="11"/>
        <end position="18"/>
    </location>
</feature>
<feature type="cross-link" description="2'-cysteinyl-6'-hydroxytryptophan sulfoxide (Trp-Cys)" evidence="2">
    <location>
        <begin position="12"/>
        <end position="16"/>
    </location>
</feature>
<gene>
    <name evidence="5" type="primary">AMA</name>
</gene>
<organism>
    <name type="scientific">Amanita exitialis</name>
    <name type="common">Guangzhou destroying angel</name>
    <dbReference type="NCBI Taxonomy" id="262245"/>
    <lineage>
        <taxon>Eukaryota</taxon>
        <taxon>Fungi</taxon>
        <taxon>Dikarya</taxon>
        <taxon>Basidiomycota</taxon>
        <taxon>Agaricomycotina</taxon>
        <taxon>Agaricomycetes</taxon>
        <taxon>Agaricomycetidae</taxon>
        <taxon>Agaricales</taxon>
        <taxon>Pluteineae</taxon>
        <taxon>Amanitaceae</taxon>
        <taxon>Amanita</taxon>
    </lineage>
</organism>
<accession>U5L406</accession>
<evidence type="ECO:0000250" key="1">
    <source>
        <dbReference type="UniProtKB" id="A0A067SLB9"/>
    </source>
</evidence>
<evidence type="ECO:0000250" key="2">
    <source>
        <dbReference type="UniProtKB" id="P85421"/>
    </source>
</evidence>
<evidence type="ECO:0000269" key="3">
    <source>
    </source>
</evidence>
<evidence type="ECO:0000303" key="4">
    <source>
    </source>
</evidence>
<evidence type="ECO:0000303" key="5">
    <source>
    </source>
</evidence>
<evidence type="ECO:0000305" key="6"/>
<evidence type="ECO:0000305" key="7">
    <source>
    </source>
</evidence>
<name>AAMA1_AMAEX</name>
<keyword id="KW-0379">Hydroxylation</keyword>
<keyword id="KW-0883">Thioether bond</keyword>
<keyword id="KW-0800">Toxin</keyword>